<comment type="function">
    <text evidence="1">subunit of the RNA-dependent RNA polymerase which is responsible for replication and transcription of virus RNA segments. The transcription of viral mRNAs occurs by a unique mechanism called cap-snatching. 5' methylated caps of cellular mRNAs are cleaved after 10-13 nucleotides by PA. In turn, these short capped RNAs are used as primers by PB1 for transcription of viral mRNAs. During virus replication, PB1 initiates RNA synthesis and copy vRNA into complementary RNA (cRNA) which in turn serves as a template for the production of more vRNAs.</text>
</comment>
<comment type="subunit">
    <text evidence="2">RNA polymerase is composed of three subunits: PA, PB1 and PB2.</text>
</comment>
<keyword id="KW-1157">Cap snatching</keyword>
<keyword id="KW-0506">mRNA capping</keyword>
<keyword id="KW-0507">mRNA processing</keyword>
<keyword id="KW-1185">Reference proteome</keyword>
<gene>
    <name type="primary">PB2</name>
    <name type="ordered locus">Segment 2</name>
</gene>
<feature type="chain" id="PRO_0000443069" description="Polymerase basic protein 2">
    <location>
        <begin position="1"/>
        <end position="733"/>
    </location>
</feature>
<organism>
    <name type="scientific">Quaranfil virus (isolate QrfV/Tick/Afghanistan/EG_T_377/1968)</name>
    <name type="common">QRFV</name>
    <dbReference type="NCBI Taxonomy" id="1559362"/>
    <lineage>
        <taxon>Viruses</taxon>
        <taxon>Riboviria</taxon>
        <taxon>Orthornavirae</taxon>
        <taxon>Negarnaviricota</taxon>
        <taxon>Polyploviricotina</taxon>
        <taxon>Insthoviricetes</taxon>
        <taxon>Articulavirales</taxon>
        <taxon>Orthomyxoviridae</taxon>
        <taxon>Quaranjavirus</taxon>
        <taxon>Quaranjavirus quaranfilense</taxon>
    </lineage>
</organism>
<protein>
    <recommendedName>
        <fullName>Polymerase basic protein 2</fullName>
        <shortName>PB2</shortName>
    </recommendedName>
</protein>
<evidence type="ECO:0000250" key="1">
    <source>
        <dbReference type="UniProtKB" id="P03428"/>
    </source>
</evidence>
<evidence type="ECO:0000250" key="2">
    <source>
        <dbReference type="UniProtKB" id="P03431"/>
    </source>
</evidence>
<proteinExistence type="inferred from homology"/>
<dbReference type="EMBL" id="GQ499302">
    <property type="protein sequence ID" value="ACY56278.1"/>
    <property type="molecule type" value="Genomic_RNA"/>
</dbReference>
<dbReference type="Proteomes" id="UP000029941">
    <property type="component" value="Genome"/>
</dbReference>
<dbReference type="GO" id="GO:0006370">
    <property type="term" value="P:7-methylguanosine mRNA capping"/>
    <property type="evidence" value="ECO:0007669"/>
    <property type="project" value="UniProtKB-KW"/>
</dbReference>
<dbReference type="GO" id="GO:0075526">
    <property type="term" value="P:cap snatching"/>
    <property type="evidence" value="ECO:0007669"/>
    <property type="project" value="UniProtKB-KW"/>
</dbReference>
<sequence length="733" mass="84784">MAATPESLQARKTRLLSVVRKIKSVALDPLADQVFGLLRSNPVCNKRVLTKYARVVKDPDPIATTQLLMGQKYPILAKEKYLHHFTPEERAANFAEEEDCRRPGWKRCTRKALNLWLDKEIEPNEETKQVIKVLYENSFDLVRDYLSHSWDRAIIRYGIVPKERQVVATRKVLVDVPKEYRQKAVVEIIQPGFNLNQPEVKIYVEKIMEKIGHKMVLGMSIVDQARVLLNSLDPKMRMLPVAVTLHDNLAQHSISYYGNNWMVHHLPGRVYDTPGDTNDLREACSLIMREVLKVKPEKRRDHLLHLRKGPQGLLEVLQETKENYPVKVIKSLLGLPCSKSHDYFGTQMIIEAAVEESRLVTSGGGVSWREYTGIERIHFRHDDVRGWYTHDGPLIKEIVFSRTERKTFTKLLVNIANYIHYDWAARPAKTAKEMRRLTMEEVMLSPWSFLGATRGIWQEFWARLDSSYFPTSEEIRNYLQMGDGEIKIRCVLETEVPGDTSVYYRVTDEGALVEVGGSSRIPKIESLPKRSSKTLDGTWNSNDMTFIPILHPTVCLPRTIEFHYSRPDLLSDIQCFNFSNYNQHCPYLLPANERASFCNTARMMLYGASTQVRRWPKVYLAYLYCFAGFHETPTVSKLHRTRFLTYDEIDLYAQRGVFKHNPENDTWLIFNKEWVGLNDPFQFPGLLVSSALLGYRLENVTHAGKRKREDDLMDLKDGMKELESKMDGSSVYV</sequence>
<reference key="1">
    <citation type="journal article" date="2009" name="J. Virol.">
        <title>Quaranfil, Johnston Atoll, and Lake Chad viruses are novel members of the family Orthomyxoviridae.</title>
        <authorList>
            <person name="Presti R.M."/>
            <person name="Zhao G."/>
            <person name="Beatty W.L."/>
            <person name="Mihindukulasuriya K.A."/>
            <person name="da Rosa A.P."/>
            <person name="Popov V.L."/>
            <person name="Tesh R.B."/>
            <person name="Virgin H.W."/>
            <person name="Wang D."/>
        </authorList>
    </citation>
    <scope>NUCLEOTIDE SEQUENCE [GENOMIC RNA]</scope>
</reference>
<accession>D0UFC7</accession>
<name>PB2_QRFVE</name>
<organismHost>
    <name type="scientific">Ixodidae</name>
    <name type="common">hardbacked ticks</name>
    <dbReference type="NCBI Taxonomy" id="6939"/>
</organismHost>